<accession>Q0VQD6</accession>
<gene>
    <name evidence="1" type="primary">eno</name>
    <name type="ordered locus">ABO_1164</name>
</gene>
<feature type="chain" id="PRO_0000266992" description="Enolase">
    <location>
        <begin position="1"/>
        <end position="430"/>
    </location>
</feature>
<feature type="active site" description="Proton donor" evidence="1">
    <location>
        <position position="209"/>
    </location>
</feature>
<feature type="active site" description="Proton acceptor" evidence="1">
    <location>
        <position position="341"/>
    </location>
</feature>
<feature type="binding site" evidence="1">
    <location>
        <position position="167"/>
    </location>
    <ligand>
        <name>(2R)-2-phosphoglycerate</name>
        <dbReference type="ChEBI" id="CHEBI:58289"/>
    </ligand>
</feature>
<feature type="binding site" evidence="1">
    <location>
        <position position="246"/>
    </location>
    <ligand>
        <name>Mg(2+)</name>
        <dbReference type="ChEBI" id="CHEBI:18420"/>
    </ligand>
</feature>
<feature type="binding site" evidence="1">
    <location>
        <position position="289"/>
    </location>
    <ligand>
        <name>Mg(2+)</name>
        <dbReference type="ChEBI" id="CHEBI:18420"/>
    </ligand>
</feature>
<feature type="binding site" evidence="1">
    <location>
        <position position="316"/>
    </location>
    <ligand>
        <name>Mg(2+)</name>
        <dbReference type="ChEBI" id="CHEBI:18420"/>
    </ligand>
</feature>
<feature type="binding site" evidence="1">
    <location>
        <position position="341"/>
    </location>
    <ligand>
        <name>(2R)-2-phosphoglycerate</name>
        <dbReference type="ChEBI" id="CHEBI:58289"/>
    </ligand>
</feature>
<feature type="binding site" evidence="1">
    <location>
        <position position="370"/>
    </location>
    <ligand>
        <name>(2R)-2-phosphoglycerate</name>
        <dbReference type="ChEBI" id="CHEBI:58289"/>
    </ligand>
</feature>
<feature type="binding site" evidence="1">
    <location>
        <position position="371"/>
    </location>
    <ligand>
        <name>(2R)-2-phosphoglycerate</name>
        <dbReference type="ChEBI" id="CHEBI:58289"/>
    </ligand>
</feature>
<feature type="binding site" evidence="1">
    <location>
        <position position="392"/>
    </location>
    <ligand>
        <name>(2R)-2-phosphoglycerate</name>
        <dbReference type="ChEBI" id="CHEBI:58289"/>
    </ligand>
</feature>
<proteinExistence type="inferred from homology"/>
<evidence type="ECO:0000255" key="1">
    <source>
        <dbReference type="HAMAP-Rule" id="MF_00318"/>
    </source>
</evidence>
<comment type="function">
    <text evidence="1">Catalyzes the reversible conversion of 2-phosphoglycerate (2-PG) into phosphoenolpyruvate (PEP). It is essential for the degradation of carbohydrates via glycolysis.</text>
</comment>
<comment type="catalytic activity">
    <reaction evidence="1">
        <text>(2R)-2-phosphoglycerate = phosphoenolpyruvate + H2O</text>
        <dbReference type="Rhea" id="RHEA:10164"/>
        <dbReference type="ChEBI" id="CHEBI:15377"/>
        <dbReference type="ChEBI" id="CHEBI:58289"/>
        <dbReference type="ChEBI" id="CHEBI:58702"/>
        <dbReference type="EC" id="4.2.1.11"/>
    </reaction>
</comment>
<comment type="cofactor">
    <cofactor evidence="1">
        <name>Mg(2+)</name>
        <dbReference type="ChEBI" id="CHEBI:18420"/>
    </cofactor>
    <text evidence="1">Binds a second Mg(2+) ion via substrate during catalysis.</text>
</comment>
<comment type="pathway">
    <text evidence="1">Carbohydrate degradation; glycolysis; pyruvate from D-glyceraldehyde 3-phosphate: step 4/5.</text>
</comment>
<comment type="subunit">
    <text evidence="1">Component of the RNA degradosome, a multiprotein complex involved in RNA processing and mRNA degradation.</text>
</comment>
<comment type="subcellular location">
    <subcellularLocation>
        <location evidence="1">Cytoplasm</location>
    </subcellularLocation>
    <subcellularLocation>
        <location evidence="1">Secreted</location>
    </subcellularLocation>
    <subcellularLocation>
        <location evidence="1">Cell surface</location>
    </subcellularLocation>
    <text evidence="1">Fractions of enolase are present in both the cytoplasm and on the cell surface.</text>
</comment>
<comment type="similarity">
    <text evidence="1">Belongs to the enolase family.</text>
</comment>
<reference key="1">
    <citation type="journal article" date="2006" name="Nat. Biotechnol.">
        <title>Genome sequence of the ubiquitous hydrocarbon-degrading marine bacterium Alcanivorax borkumensis.</title>
        <authorList>
            <person name="Schneiker S."/>
            <person name="Martins dos Santos V.A.P."/>
            <person name="Bartels D."/>
            <person name="Bekel T."/>
            <person name="Brecht M."/>
            <person name="Buhrmester J."/>
            <person name="Chernikova T.N."/>
            <person name="Denaro R."/>
            <person name="Ferrer M."/>
            <person name="Gertler C."/>
            <person name="Goesmann A."/>
            <person name="Golyshina O.V."/>
            <person name="Kaminski F."/>
            <person name="Khachane A.N."/>
            <person name="Lang S."/>
            <person name="Linke B."/>
            <person name="McHardy A.C."/>
            <person name="Meyer F."/>
            <person name="Nechitaylo T."/>
            <person name="Puehler A."/>
            <person name="Regenhardt D."/>
            <person name="Rupp O."/>
            <person name="Sabirova J.S."/>
            <person name="Selbitschka W."/>
            <person name="Yakimov M.M."/>
            <person name="Timmis K.N."/>
            <person name="Vorhoelter F.-J."/>
            <person name="Weidner S."/>
            <person name="Kaiser O."/>
            <person name="Golyshin P.N."/>
        </authorList>
    </citation>
    <scope>NUCLEOTIDE SEQUENCE [LARGE SCALE GENOMIC DNA]</scope>
    <source>
        <strain>ATCC 700651 / DSM 11573 / NCIMB 13689 / SK2</strain>
    </source>
</reference>
<sequence>MSKIVDIKAREILDSRGNPTIEADVILESGASGSACAPSGASTGSREALELRDGDKSRYLGKGVTKAVGNVNSAIRELLVGMEVSDQKALDQAMLDADGTENKGNLGANAILAVSLAAAKAAAVDQGKPLYEYISDLQDDDNEYSLPVPMMNIINGGEHADNNVDIQEFMIQPVGAPTVAEAIRYGAEIFHALKGVLKKRGLNTAVGDEGGFAPNLPSNEAALEAIMEAIEIAGYKAGDDVTLALDCAASEFYKDGKYVLAGEDRSMNSEEFADYLAELCDRYPIISIEDGMDESDWDGWKILTEKLGKKVQLVGDDLFVTNTRILQRGIDEKVANSILIKFNQIGSLTETLDAIKMAKDAGYTAVISHRSGETADTTIADLAVATAAGQIKTGSLCRSDRVAKYNRLIRIEQELGRAAYHGRKEFKLLG</sequence>
<dbReference type="EC" id="4.2.1.11" evidence="1"/>
<dbReference type="EMBL" id="AM286690">
    <property type="protein sequence ID" value="CAL16612.1"/>
    <property type="molecule type" value="Genomic_DNA"/>
</dbReference>
<dbReference type="RefSeq" id="WP_011588447.1">
    <property type="nucleotide sequence ID" value="NC_008260.1"/>
</dbReference>
<dbReference type="SMR" id="Q0VQD6"/>
<dbReference type="STRING" id="393595.ABO_1164"/>
<dbReference type="KEGG" id="abo:ABO_1164"/>
<dbReference type="eggNOG" id="COG0148">
    <property type="taxonomic scope" value="Bacteria"/>
</dbReference>
<dbReference type="HOGENOM" id="CLU_031223_2_1_6"/>
<dbReference type="OrthoDB" id="9804716at2"/>
<dbReference type="UniPathway" id="UPA00109">
    <property type="reaction ID" value="UER00187"/>
</dbReference>
<dbReference type="Proteomes" id="UP000008871">
    <property type="component" value="Chromosome"/>
</dbReference>
<dbReference type="GO" id="GO:0009986">
    <property type="term" value="C:cell surface"/>
    <property type="evidence" value="ECO:0007669"/>
    <property type="project" value="UniProtKB-SubCell"/>
</dbReference>
<dbReference type="GO" id="GO:0005576">
    <property type="term" value="C:extracellular region"/>
    <property type="evidence" value="ECO:0007669"/>
    <property type="project" value="UniProtKB-SubCell"/>
</dbReference>
<dbReference type="GO" id="GO:0000015">
    <property type="term" value="C:phosphopyruvate hydratase complex"/>
    <property type="evidence" value="ECO:0007669"/>
    <property type="project" value="InterPro"/>
</dbReference>
<dbReference type="GO" id="GO:0000287">
    <property type="term" value="F:magnesium ion binding"/>
    <property type="evidence" value="ECO:0007669"/>
    <property type="project" value="UniProtKB-UniRule"/>
</dbReference>
<dbReference type="GO" id="GO:0004634">
    <property type="term" value="F:phosphopyruvate hydratase activity"/>
    <property type="evidence" value="ECO:0007669"/>
    <property type="project" value="UniProtKB-UniRule"/>
</dbReference>
<dbReference type="GO" id="GO:0006096">
    <property type="term" value="P:glycolytic process"/>
    <property type="evidence" value="ECO:0007669"/>
    <property type="project" value="UniProtKB-UniRule"/>
</dbReference>
<dbReference type="CDD" id="cd03313">
    <property type="entry name" value="enolase"/>
    <property type="match status" value="1"/>
</dbReference>
<dbReference type="FunFam" id="3.20.20.120:FF:000001">
    <property type="entry name" value="Enolase"/>
    <property type="match status" value="1"/>
</dbReference>
<dbReference type="FunFam" id="3.30.390.10:FF:000001">
    <property type="entry name" value="Enolase"/>
    <property type="match status" value="1"/>
</dbReference>
<dbReference type="Gene3D" id="3.20.20.120">
    <property type="entry name" value="Enolase-like C-terminal domain"/>
    <property type="match status" value="1"/>
</dbReference>
<dbReference type="Gene3D" id="3.30.390.10">
    <property type="entry name" value="Enolase-like, N-terminal domain"/>
    <property type="match status" value="1"/>
</dbReference>
<dbReference type="HAMAP" id="MF_00318">
    <property type="entry name" value="Enolase"/>
    <property type="match status" value="1"/>
</dbReference>
<dbReference type="InterPro" id="IPR000941">
    <property type="entry name" value="Enolase"/>
</dbReference>
<dbReference type="InterPro" id="IPR036849">
    <property type="entry name" value="Enolase-like_C_sf"/>
</dbReference>
<dbReference type="InterPro" id="IPR029017">
    <property type="entry name" value="Enolase-like_N"/>
</dbReference>
<dbReference type="InterPro" id="IPR020810">
    <property type="entry name" value="Enolase_C"/>
</dbReference>
<dbReference type="InterPro" id="IPR020809">
    <property type="entry name" value="Enolase_CS"/>
</dbReference>
<dbReference type="InterPro" id="IPR020811">
    <property type="entry name" value="Enolase_N"/>
</dbReference>
<dbReference type="NCBIfam" id="TIGR01060">
    <property type="entry name" value="eno"/>
    <property type="match status" value="1"/>
</dbReference>
<dbReference type="PANTHER" id="PTHR11902">
    <property type="entry name" value="ENOLASE"/>
    <property type="match status" value="1"/>
</dbReference>
<dbReference type="PANTHER" id="PTHR11902:SF1">
    <property type="entry name" value="ENOLASE"/>
    <property type="match status" value="1"/>
</dbReference>
<dbReference type="Pfam" id="PF00113">
    <property type="entry name" value="Enolase_C"/>
    <property type="match status" value="1"/>
</dbReference>
<dbReference type="Pfam" id="PF03952">
    <property type="entry name" value="Enolase_N"/>
    <property type="match status" value="1"/>
</dbReference>
<dbReference type="PIRSF" id="PIRSF001400">
    <property type="entry name" value="Enolase"/>
    <property type="match status" value="1"/>
</dbReference>
<dbReference type="PRINTS" id="PR00148">
    <property type="entry name" value="ENOLASE"/>
</dbReference>
<dbReference type="SFLD" id="SFLDF00002">
    <property type="entry name" value="enolase"/>
    <property type="match status" value="1"/>
</dbReference>
<dbReference type="SFLD" id="SFLDG00178">
    <property type="entry name" value="enolase"/>
    <property type="match status" value="1"/>
</dbReference>
<dbReference type="SMART" id="SM01192">
    <property type="entry name" value="Enolase_C"/>
    <property type="match status" value="1"/>
</dbReference>
<dbReference type="SMART" id="SM01193">
    <property type="entry name" value="Enolase_N"/>
    <property type="match status" value="1"/>
</dbReference>
<dbReference type="SUPFAM" id="SSF51604">
    <property type="entry name" value="Enolase C-terminal domain-like"/>
    <property type="match status" value="1"/>
</dbReference>
<dbReference type="SUPFAM" id="SSF54826">
    <property type="entry name" value="Enolase N-terminal domain-like"/>
    <property type="match status" value="1"/>
</dbReference>
<dbReference type="PROSITE" id="PS00164">
    <property type="entry name" value="ENOLASE"/>
    <property type="match status" value="1"/>
</dbReference>
<name>ENO_ALCBS</name>
<keyword id="KW-0963">Cytoplasm</keyword>
<keyword id="KW-0324">Glycolysis</keyword>
<keyword id="KW-0456">Lyase</keyword>
<keyword id="KW-0460">Magnesium</keyword>
<keyword id="KW-0479">Metal-binding</keyword>
<keyword id="KW-1185">Reference proteome</keyword>
<keyword id="KW-0964">Secreted</keyword>
<protein>
    <recommendedName>
        <fullName evidence="1">Enolase</fullName>
        <ecNumber evidence="1">4.2.1.11</ecNumber>
    </recommendedName>
    <alternativeName>
        <fullName evidence="1">2-phospho-D-glycerate hydro-lyase</fullName>
    </alternativeName>
    <alternativeName>
        <fullName evidence="1">2-phosphoglycerate dehydratase</fullName>
    </alternativeName>
</protein>
<organism>
    <name type="scientific">Alcanivorax borkumensis (strain ATCC 700651 / DSM 11573 / NCIMB 13689 / SK2)</name>
    <dbReference type="NCBI Taxonomy" id="393595"/>
    <lineage>
        <taxon>Bacteria</taxon>
        <taxon>Pseudomonadati</taxon>
        <taxon>Pseudomonadota</taxon>
        <taxon>Gammaproteobacteria</taxon>
        <taxon>Oceanospirillales</taxon>
        <taxon>Alcanivoracaceae</taxon>
        <taxon>Alcanivorax</taxon>
    </lineage>
</organism>